<protein>
    <recommendedName>
        <fullName evidence="1">Aspartate carbamoyltransferase catalytic subunit</fullName>
        <ecNumber evidence="1">2.1.3.2</ecNumber>
    </recommendedName>
    <alternativeName>
        <fullName evidence="1">Aspartate transcarbamylase</fullName>
        <shortName evidence="1">ATCase</shortName>
    </alternativeName>
</protein>
<comment type="function">
    <text evidence="1">Catalyzes the condensation of carbamoyl phosphate and aspartate to form carbamoyl aspartate and inorganic phosphate, the committed step in the de novo pyrimidine nucleotide biosynthesis pathway.</text>
</comment>
<comment type="catalytic activity">
    <reaction evidence="1">
        <text>carbamoyl phosphate + L-aspartate = N-carbamoyl-L-aspartate + phosphate + H(+)</text>
        <dbReference type="Rhea" id="RHEA:20013"/>
        <dbReference type="ChEBI" id="CHEBI:15378"/>
        <dbReference type="ChEBI" id="CHEBI:29991"/>
        <dbReference type="ChEBI" id="CHEBI:32814"/>
        <dbReference type="ChEBI" id="CHEBI:43474"/>
        <dbReference type="ChEBI" id="CHEBI:58228"/>
        <dbReference type="EC" id="2.1.3.2"/>
    </reaction>
</comment>
<comment type="pathway">
    <text evidence="1">Pyrimidine metabolism; UMP biosynthesis via de novo pathway; (S)-dihydroorotate from bicarbonate: step 2/3.</text>
</comment>
<comment type="subunit">
    <text evidence="1">Heterododecamer (2C3:3R2) of six catalytic PyrB chains organized as two trimers (C3), and six regulatory PyrI chains organized as three dimers (R2).</text>
</comment>
<comment type="similarity">
    <text evidence="1">Belongs to the aspartate/ornithine carbamoyltransferase superfamily. ATCase family.</text>
</comment>
<organism>
    <name type="scientific">Cellvibrio japonicus (strain Ueda107)</name>
    <name type="common">Pseudomonas fluorescens subsp. cellulosa</name>
    <dbReference type="NCBI Taxonomy" id="498211"/>
    <lineage>
        <taxon>Bacteria</taxon>
        <taxon>Pseudomonadati</taxon>
        <taxon>Pseudomonadota</taxon>
        <taxon>Gammaproteobacteria</taxon>
        <taxon>Cellvibrionales</taxon>
        <taxon>Cellvibrionaceae</taxon>
        <taxon>Cellvibrio</taxon>
    </lineage>
</organism>
<feature type="chain" id="PRO_1000088746" description="Aspartate carbamoyltransferase catalytic subunit">
    <location>
        <begin position="1"/>
        <end position="338"/>
    </location>
</feature>
<feature type="binding site" evidence="1">
    <location>
        <position position="57"/>
    </location>
    <ligand>
        <name>carbamoyl phosphate</name>
        <dbReference type="ChEBI" id="CHEBI:58228"/>
    </ligand>
</feature>
<feature type="binding site" evidence="1">
    <location>
        <position position="58"/>
    </location>
    <ligand>
        <name>carbamoyl phosphate</name>
        <dbReference type="ChEBI" id="CHEBI:58228"/>
    </ligand>
</feature>
<feature type="binding site" evidence="1">
    <location>
        <position position="86"/>
    </location>
    <ligand>
        <name>L-aspartate</name>
        <dbReference type="ChEBI" id="CHEBI:29991"/>
    </ligand>
</feature>
<feature type="binding site" evidence="1">
    <location>
        <position position="107"/>
    </location>
    <ligand>
        <name>carbamoyl phosphate</name>
        <dbReference type="ChEBI" id="CHEBI:58228"/>
    </ligand>
</feature>
<feature type="binding site" evidence="1">
    <location>
        <position position="135"/>
    </location>
    <ligand>
        <name>carbamoyl phosphate</name>
        <dbReference type="ChEBI" id="CHEBI:58228"/>
    </ligand>
</feature>
<feature type="binding site" evidence="1">
    <location>
        <position position="138"/>
    </location>
    <ligand>
        <name>carbamoyl phosphate</name>
        <dbReference type="ChEBI" id="CHEBI:58228"/>
    </ligand>
</feature>
<feature type="binding site" evidence="1">
    <location>
        <position position="172"/>
    </location>
    <ligand>
        <name>L-aspartate</name>
        <dbReference type="ChEBI" id="CHEBI:29991"/>
    </ligand>
</feature>
<feature type="binding site" evidence="1">
    <location>
        <position position="234"/>
    </location>
    <ligand>
        <name>L-aspartate</name>
        <dbReference type="ChEBI" id="CHEBI:29991"/>
    </ligand>
</feature>
<feature type="binding site" evidence="1">
    <location>
        <position position="274"/>
    </location>
    <ligand>
        <name>carbamoyl phosphate</name>
        <dbReference type="ChEBI" id="CHEBI:58228"/>
    </ligand>
</feature>
<feature type="binding site" evidence="1">
    <location>
        <position position="275"/>
    </location>
    <ligand>
        <name>carbamoyl phosphate</name>
        <dbReference type="ChEBI" id="CHEBI:58228"/>
    </ligand>
</feature>
<sequence length="338" mass="37809">MNFTGAHILSIQQFQREDINRIFDVADAMEPYALRRRVTRVLEGAILGNMFFEPSTRTRVSFGAAFNLLGGNVRETTGFESSSLTKGESLFDTARVLSGYSDVICMRHPAAGSVAEFAEGSRVPVINGGDGPNEHPTQALLDLYTIRKELRSKGRGIDDLRIAMIGDLKHGRTVHSLCKLLGLFNNVSITLVSPKELAMPDYIVEDLRQAGHKVTITDDLPTSITHIDIAYSTRIQEERFASKEEADSYRGRFRLNQAIYTQFCEPNTVIMHPLPRDSRAEANELDNDLNTNPNLAIFRQADNGVLVRMALFALVLDVADQVDKYAREVRWFSSLRAN</sequence>
<accession>B3PKF2</accession>
<name>PYRB_CELJU</name>
<dbReference type="EC" id="2.1.3.2" evidence="1"/>
<dbReference type="EMBL" id="CP000934">
    <property type="protein sequence ID" value="ACE84888.1"/>
    <property type="molecule type" value="Genomic_DNA"/>
</dbReference>
<dbReference type="RefSeq" id="WP_012488018.1">
    <property type="nucleotide sequence ID" value="NC_010995.1"/>
</dbReference>
<dbReference type="SMR" id="B3PKF2"/>
<dbReference type="STRING" id="498211.CJA_2419"/>
<dbReference type="KEGG" id="cja:CJA_2419"/>
<dbReference type="eggNOG" id="COG0540">
    <property type="taxonomic scope" value="Bacteria"/>
</dbReference>
<dbReference type="HOGENOM" id="CLU_043846_1_2_6"/>
<dbReference type="OrthoDB" id="9774690at2"/>
<dbReference type="UniPathway" id="UPA00070">
    <property type="reaction ID" value="UER00116"/>
</dbReference>
<dbReference type="Proteomes" id="UP000001036">
    <property type="component" value="Chromosome"/>
</dbReference>
<dbReference type="GO" id="GO:0005829">
    <property type="term" value="C:cytosol"/>
    <property type="evidence" value="ECO:0007669"/>
    <property type="project" value="TreeGrafter"/>
</dbReference>
<dbReference type="GO" id="GO:0016597">
    <property type="term" value="F:amino acid binding"/>
    <property type="evidence" value="ECO:0007669"/>
    <property type="project" value="InterPro"/>
</dbReference>
<dbReference type="GO" id="GO:0004070">
    <property type="term" value="F:aspartate carbamoyltransferase activity"/>
    <property type="evidence" value="ECO:0007669"/>
    <property type="project" value="UniProtKB-UniRule"/>
</dbReference>
<dbReference type="GO" id="GO:0006207">
    <property type="term" value="P:'de novo' pyrimidine nucleobase biosynthetic process"/>
    <property type="evidence" value="ECO:0007669"/>
    <property type="project" value="InterPro"/>
</dbReference>
<dbReference type="GO" id="GO:0044205">
    <property type="term" value="P:'de novo' UMP biosynthetic process"/>
    <property type="evidence" value="ECO:0007669"/>
    <property type="project" value="UniProtKB-UniRule"/>
</dbReference>
<dbReference type="GO" id="GO:0006520">
    <property type="term" value="P:amino acid metabolic process"/>
    <property type="evidence" value="ECO:0007669"/>
    <property type="project" value="InterPro"/>
</dbReference>
<dbReference type="FunFam" id="3.40.50.1370:FF:000002">
    <property type="entry name" value="Aspartate carbamoyltransferase 2"/>
    <property type="match status" value="1"/>
</dbReference>
<dbReference type="Gene3D" id="3.40.50.1370">
    <property type="entry name" value="Aspartate/ornithine carbamoyltransferase"/>
    <property type="match status" value="2"/>
</dbReference>
<dbReference type="HAMAP" id="MF_00001">
    <property type="entry name" value="Asp_carb_tr"/>
    <property type="match status" value="1"/>
</dbReference>
<dbReference type="InterPro" id="IPR006132">
    <property type="entry name" value="Asp/Orn_carbamoyltranf_P-bd"/>
</dbReference>
<dbReference type="InterPro" id="IPR006130">
    <property type="entry name" value="Asp/Orn_carbamoylTrfase"/>
</dbReference>
<dbReference type="InterPro" id="IPR036901">
    <property type="entry name" value="Asp/Orn_carbamoylTrfase_sf"/>
</dbReference>
<dbReference type="InterPro" id="IPR002082">
    <property type="entry name" value="Asp_carbamoyltransf"/>
</dbReference>
<dbReference type="InterPro" id="IPR006131">
    <property type="entry name" value="Asp_carbamoyltransf_Asp/Orn-bd"/>
</dbReference>
<dbReference type="NCBIfam" id="TIGR00670">
    <property type="entry name" value="asp_carb_tr"/>
    <property type="match status" value="1"/>
</dbReference>
<dbReference type="NCBIfam" id="NF002032">
    <property type="entry name" value="PRK00856.1"/>
    <property type="match status" value="1"/>
</dbReference>
<dbReference type="NCBIfam" id="NF006046">
    <property type="entry name" value="PRK08192.1"/>
    <property type="match status" value="1"/>
</dbReference>
<dbReference type="PANTHER" id="PTHR45753:SF6">
    <property type="entry name" value="ASPARTATE CARBAMOYLTRANSFERASE"/>
    <property type="match status" value="1"/>
</dbReference>
<dbReference type="PANTHER" id="PTHR45753">
    <property type="entry name" value="ORNITHINE CARBAMOYLTRANSFERASE, MITOCHONDRIAL"/>
    <property type="match status" value="1"/>
</dbReference>
<dbReference type="Pfam" id="PF00185">
    <property type="entry name" value="OTCace"/>
    <property type="match status" value="1"/>
</dbReference>
<dbReference type="Pfam" id="PF02729">
    <property type="entry name" value="OTCace_N"/>
    <property type="match status" value="1"/>
</dbReference>
<dbReference type="PRINTS" id="PR00100">
    <property type="entry name" value="AOTCASE"/>
</dbReference>
<dbReference type="PRINTS" id="PR00101">
    <property type="entry name" value="ATCASE"/>
</dbReference>
<dbReference type="SUPFAM" id="SSF53671">
    <property type="entry name" value="Aspartate/ornithine carbamoyltransferase"/>
    <property type="match status" value="1"/>
</dbReference>
<dbReference type="PROSITE" id="PS00097">
    <property type="entry name" value="CARBAMOYLTRANSFERASE"/>
    <property type="match status" value="1"/>
</dbReference>
<gene>
    <name evidence="1" type="primary">pyrB</name>
    <name type="ordered locus">CJA_2419</name>
</gene>
<evidence type="ECO:0000255" key="1">
    <source>
        <dbReference type="HAMAP-Rule" id="MF_00001"/>
    </source>
</evidence>
<reference key="1">
    <citation type="journal article" date="2008" name="J. Bacteriol.">
        <title>Insights into plant cell wall degradation from the genome sequence of the soil bacterium Cellvibrio japonicus.</title>
        <authorList>
            <person name="DeBoy R.T."/>
            <person name="Mongodin E.F."/>
            <person name="Fouts D.E."/>
            <person name="Tailford L.E."/>
            <person name="Khouri H."/>
            <person name="Emerson J.B."/>
            <person name="Mohamoud Y."/>
            <person name="Watkins K."/>
            <person name="Henrissat B."/>
            <person name="Gilbert H.J."/>
            <person name="Nelson K.E."/>
        </authorList>
    </citation>
    <scope>NUCLEOTIDE SEQUENCE [LARGE SCALE GENOMIC DNA]</scope>
    <source>
        <strain>Ueda107</strain>
    </source>
</reference>
<keyword id="KW-0665">Pyrimidine biosynthesis</keyword>
<keyword id="KW-1185">Reference proteome</keyword>
<keyword id="KW-0808">Transferase</keyword>
<proteinExistence type="inferred from homology"/>